<organism>
    <name type="scientific">Saccharomyces cerevisiae (strain YJM789)</name>
    <name type="common">Baker's yeast</name>
    <dbReference type="NCBI Taxonomy" id="307796"/>
    <lineage>
        <taxon>Eukaryota</taxon>
        <taxon>Fungi</taxon>
        <taxon>Dikarya</taxon>
        <taxon>Ascomycota</taxon>
        <taxon>Saccharomycotina</taxon>
        <taxon>Saccharomycetes</taxon>
        <taxon>Saccharomycetales</taxon>
        <taxon>Saccharomycetaceae</taxon>
        <taxon>Saccharomyces</taxon>
    </lineage>
</organism>
<proteinExistence type="inferred from homology"/>
<accession>A6ZTA4</accession>
<protein>
    <recommendedName>
        <fullName>Altered inheritance of mitochondria protein 18, mitochondrial</fullName>
    </recommendedName>
</protein>
<evidence type="ECO:0000250" key="1"/>
<evidence type="ECO:0000255" key="2"/>
<evidence type="ECO:0000305" key="3"/>
<dbReference type="EMBL" id="AAFW02000082">
    <property type="protein sequence ID" value="EDN62435.1"/>
    <property type="molecule type" value="Genomic_DNA"/>
</dbReference>
<dbReference type="SMR" id="A6ZTA4"/>
<dbReference type="HOGENOM" id="CLU_038840_0_0_1"/>
<dbReference type="Proteomes" id="UP000007060">
    <property type="component" value="Unassembled WGS sequence"/>
</dbReference>
<dbReference type="GO" id="GO:0005739">
    <property type="term" value="C:mitochondrion"/>
    <property type="evidence" value="ECO:0007669"/>
    <property type="project" value="UniProtKB-SubCell"/>
</dbReference>
<dbReference type="GO" id="GO:0016872">
    <property type="term" value="F:intramolecular lyase activity"/>
    <property type="evidence" value="ECO:0007669"/>
    <property type="project" value="InterPro"/>
</dbReference>
<dbReference type="Gene3D" id="3.50.70.10">
    <property type="match status" value="1"/>
</dbReference>
<dbReference type="InterPro" id="IPR016087">
    <property type="entry name" value="Chalcone_isomerase"/>
</dbReference>
<dbReference type="InterPro" id="IPR016088">
    <property type="entry name" value="Chalcone_isomerase_3-sand"/>
</dbReference>
<dbReference type="InterPro" id="IPR036298">
    <property type="entry name" value="Chalcone_isomerase_sf"/>
</dbReference>
<dbReference type="PANTHER" id="PTHR47284">
    <property type="entry name" value="FATTY-ACID-BINDING PROTEIN 2"/>
    <property type="match status" value="1"/>
</dbReference>
<dbReference type="PANTHER" id="PTHR47284:SF3">
    <property type="entry name" value="FATTY-ACID-BINDING PROTEIN 2"/>
    <property type="match status" value="1"/>
</dbReference>
<dbReference type="Pfam" id="PF16035">
    <property type="entry name" value="Chalcone_2"/>
    <property type="match status" value="1"/>
</dbReference>
<dbReference type="SUPFAM" id="SSF54626">
    <property type="entry name" value="Chalcone isomerase"/>
    <property type="match status" value="1"/>
</dbReference>
<sequence>MDRGRCANMLKSLQRTLAKCQKSPSTKHWQCFKRNFTSIRATKYPGRSNSTFHYWPWFAASTLLATSLYYRDRPVQNDDKTDAFPSHTESIQVDSSVSDFPLTITALNFPVSTTFKLLGYGQRHVTFLRFKVYALGLYLAENDENLVSDTLNETYLHKYFLDVDDSKTPKENLARLLKRDDSKSVMMIDDLLDSGMRMLAKITPVRNTDFKHLKEGLVKTISKHPDVANNKDTLAKGLSELNDAFSRKGSVRKNDDLIIELLANGALQFSYHDSKNNEFEVMGVVNNQLVGKFLFSQYLCGEKSPSPQAKKTAIDKLITLL</sequence>
<comment type="subcellular location">
    <subcellularLocation>
        <location evidence="1">Mitochondrion</location>
    </subcellularLocation>
</comment>
<comment type="similarity">
    <text evidence="3">Belongs to the AIM18/AIM46 family.</text>
</comment>
<feature type="transit peptide" description="Mitochondrion" evidence="2">
    <location>
        <begin position="1"/>
        <end position="72"/>
    </location>
</feature>
<feature type="chain" id="PRO_0000399558" description="Altered inheritance of mitochondria protein 18, mitochondrial">
    <location>
        <begin position="73"/>
        <end position="321"/>
    </location>
</feature>
<gene>
    <name type="primary">AIM18</name>
    <name type="synonym">FMP22</name>
    <name type="ORF">SCY_2588</name>
</gene>
<keyword id="KW-0496">Mitochondrion</keyword>
<keyword id="KW-0809">Transit peptide</keyword>
<reference key="1">
    <citation type="journal article" date="2007" name="Proc. Natl. Acad. Sci. U.S.A.">
        <title>Genome sequencing and comparative analysis of Saccharomyces cerevisiae strain YJM789.</title>
        <authorList>
            <person name="Wei W."/>
            <person name="McCusker J.H."/>
            <person name="Hyman R.W."/>
            <person name="Jones T."/>
            <person name="Ning Y."/>
            <person name="Cao Z."/>
            <person name="Gu Z."/>
            <person name="Bruno D."/>
            <person name="Miranda M."/>
            <person name="Nguyen M."/>
            <person name="Wilhelmy J."/>
            <person name="Komp C."/>
            <person name="Tamse R."/>
            <person name="Wang X."/>
            <person name="Jia P."/>
            <person name="Luedi P."/>
            <person name="Oefner P.J."/>
            <person name="David L."/>
            <person name="Dietrich F.S."/>
            <person name="Li Y."/>
            <person name="Davis R.W."/>
            <person name="Steinmetz L.M."/>
        </authorList>
    </citation>
    <scope>NUCLEOTIDE SEQUENCE [LARGE SCALE GENOMIC DNA]</scope>
    <source>
        <strain>YJM789</strain>
    </source>
</reference>
<name>AIM18_YEAS7</name>